<gene>
    <name evidence="1" type="primary">ilvC</name>
    <name type="ordered locus">ABO_0485</name>
</gene>
<protein>
    <recommendedName>
        <fullName evidence="1">Ketol-acid reductoisomerase (NADP(+))</fullName>
        <shortName evidence="1">KARI</shortName>
        <ecNumber evidence="1">1.1.1.86</ecNumber>
    </recommendedName>
    <alternativeName>
        <fullName evidence="1">Acetohydroxy-acid isomeroreductase</fullName>
        <shortName evidence="1">AHIR</shortName>
    </alternativeName>
    <alternativeName>
        <fullName evidence="1">Alpha-keto-beta-hydroxylacyl reductoisomerase</fullName>
    </alternativeName>
    <alternativeName>
        <fullName evidence="1">Ketol-acid reductoisomerase type 1</fullName>
    </alternativeName>
    <alternativeName>
        <fullName evidence="1">Ketol-acid reductoisomerase type I</fullName>
    </alternativeName>
</protein>
<proteinExistence type="inferred from homology"/>
<evidence type="ECO:0000255" key="1">
    <source>
        <dbReference type="HAMAP-Rule" id="MF_00435"/>
    </source>
</evidence>
<evidence type="ECO:0000255" key="2">
    <source>
        <dbReference type="PROSITE-ProRule" id="PRU01197"/>
    </source>
</evidence>
<evidence type="ECO:0000255" key="3">
    <source>
        <dbReference type="PROSITE-ProRule" id="PRU01198"/>
    </source>
</evidence>
<evidence type="ECO:0000305" key="4"/>
<dbReference type="EC" id="1.1.1.86" evidence="1"/>
<dbReference type="EMBL" id="AM286690">
    <property type="protein sequence ID" value="CAL15933.1"/>
    <property type="status" value="ALT_INIT"/>
    <property type="molecule type" value="Genomic_DNA"/>
</dbReference>
<dbReference type="RefSeq" id="WP_035459332.1">
    <property type="nucleotide sequence ID" value="NC_008260.1"/>
</dbReference>
<dbReference type="SMR" id="Q0VSB5"/>
<dbReference type="STRING" id="393595.ABO_0485"/>
<dbReference type="KEGG" id="abo:ABO_0485"/>
<dbReference type="eggNOG" id="COG0059">
    <property type="taxonomic scope" value="Bacteria"/>
</dbReference>
<dbReference type="HOGENOM" id="CLU_033821_0_1_6"/>
<dbReference type="OrthoDB" id="9804088at2"/>
<dbReference type="UniPathway" id="UPA00047">
    <property type="reaction ID" value="UER00056"/>
</dbReference>
<dbReference type="UniPathway" id="UPA00049">
    <property type="reaction ID" value="UER00060"/>
</dbReference>
<dbReference type="Proteomes" id="UP000008871">
    <property type="component" value="Chromosome"/>
</dbReference>
<dbReference type="GO" id="GO:0005829">
    <property type="term" value="C:cytosol"/>
    <property type="evidence" value="ECO:0007669"/>
    <property type="project" value="TreeGrafter"/>
</dbReference>
<dbReference type="GO" id="GO:0004455">
    <property type="term" value="F:ketol-acid reductoisomerase activity"/>
    <property type="evidence" value="ECO:0007669"/>
    <property type="project" value="UniProtKB-UniRule"/>
</dbReference>
<dbReference type="GO" id="GO:0000287">
    <property type="term" value="F:magnesium ion binding"/>
    <property type="evidence" value="ECO:0007669"/>
    <property type="project" value="UniProtKB-UniRule"/>
</dbReference>
<dbReference type="GO" id="GO:0050661">
    <property type="term" value="F:NADP binding"/>
    <property type="evidence" value="ECO:0007669"/>
    <property type="project" value="InterPro"/>
</dbReference>
<dbReference type="GO" id="GO:0009097">
    <property type="term" value="P:isoleucine biosynthetic process"/>
    <property type="evidence" value="ECO:0007669"/>
    <property type="project" value="UniProtKB-UniRule"/>
</dbReference>
<dbReference type="GO" id="GO:0009099">
    <property type="term" value="P:L-valine biosynthetic process"/>
    <property type="evidence" value="ECO:0007669"/>
    <property type="project" value="UniProtKB-UniRule"/>
</dbReference>
<dbReference type="FunFam" id="3.40.50.720:FF:000023">
    <property type="entry name" value="Ketol-acid reductoisomerase (NADP(+))"/>
    <property type="match status" value="1"/>
</dbReference>
<dbReference type="Gene3D" id="6.10.240.10">
    <property type="match status" value="1"/>
</dbReference>
<dbReference type="Gene3D" id="3.40.50.720">
    <property type="entry name" value="NAD(P)-binding Rossmann-like Domain"/>
    <property type="match status" value="1"/>
</dbReference>
<dbReference type="HAMAP" id="MF_00435">
    <property type="entry name" value="IlvC"/>
    <property type="match status" value="1"/>
</dbReference>
<dbReference type="InterPro" id="IPR008927">
    <property type="entry name" value="6-PGluconate_DH-like_C_sf"/>
</dbReference>
<dbReference type="InterPro" id="IPR013023">
    <property type="entry name" value="KARI"/>
</dbReference>
<dbReference type="InterPro" id="IPR000506">
    <property type="entry name" value="KARI_C"/>
</dbReference>
<dbReference type="InterPro" id="IPR013116">
    <property type="entry name" value="KARI_N"/>
</dbReference>
<dbReference type="InterPro" id="IPR014359">
    <property type="entry name" value="KARI_prok"/>
</dbReference>
<dbReference type="InterPro" id="IPR036291">
    <property type="entry name" value="NAD(P)-bd_dom_sf"/>
</dbReference>
<dbReference type="NCBIfam" id="TIGR00465">
    <property type="entry name" value="ilvC"/>
    <property type="match status" value="1"/>
</dbReference>
<dbReference type="NCBIfam" id="NF004017">
    <property type="entry name" value="PRK05479.1"/>
    <property type="match status" value="1"/>
</dbReference>
<dbReference type="NCBIfam" id="NF009940">
    <property type="entry name" value="PRK13403.1"/>
    <property type="match status" value="1"/>
</dbReference>
<dbReference type="PANTHER" id="PTHR21371">
    <property type="entry name" value="KETOL-ACID REDUCTOISOMERASE, MITOCHONDRIAL"/>
    <property type="match status" value="1"/>
</dbReference>
<dbReference type="PANTHER" id="PTHR21371:SF1">
    <property type="entry name" value="KETOL-ACID REDUCTOISOMERASE, MITOCHONDRIAL"/>
    <property type="match status" value="1"/>
</dbReference>
<dbReference type="Pfam" id="PF01450">
    <property type="entry name" value="KARI_C"/>
    <property type="match status" value="1"/>
</dbReference>
<dbReference type="Pfam" id="PF07991">
    <property type="entry name" value="KARI_N"/>
    <property type="match status" value="1"/>
</dbReference>
<dbReference type="PIRSF" id="PIRSF000116">
    <property type="entry name" value="IlvC_gammaproteo"/>
    <property type="match status" value="1"/>
</dbReference>
<dbReference type="SUPFAM" id="SSF48179">
    <property type="entry name" value="6-phosphogluconate dehydrogenase C-terminal domain-like"/>
    <property type="match status" value="1"/>
</dbReference>
<dbReference type="SUPFAM" id="SSF51735">
    <property type="entry name" value="NAD(P)-binding Rossmann-fold domains"/>
    <property type="match status" value="1"/>
</dbReference>
<dbReference type="PROSITE" id="PS51851">
    <property type="entry name" value="KARI_C"/>
    <property type="match status" value="1"/>
</dbReference>
<dbReference type="PROSITE" id="PS51850">
    <property type="entry name" value="KARI_N"/>
    <property type="match status" value="1"/>
</dbReference>
<feature type="chain" id="PRO_0000252748" description="Ketol-acid reductoisomerase (NADP(+))">
    <location>
        <begin position="1"/>
        <end position="338"/>
    </location>
</feature>
<feature type="domain" description="KARI N-terminal Rossmann" evidence="2">
    <location>
        <begin position="1"/>
        <end position="181"/>
    </location>
</feature>
<feature type="domain" description="KARI C-terminal knotted" evidence="3">
    <location>
        <begin position="182"/>
        <end position="327"/>
    </location>
</feature>
<feature type="active site" evidence="1">
    <location>
        <position position="107"/>
    </location>
</feature>
<feature type="binding site" evidence="1">
    <location>
        <begin position="24"/>
        <end position="27"/>
    </location>
    <ligand>
        <name>NADP(+)</name>
        <dbReference type="ChEBI" id="CHEBI:58349"/>
    </ligand>
</feature>
<feature type="binding site" evidence="1">
    <location>
        <position position="47"/>
    </location>
    <ligand>
        <name>NADP(+)</name>
        <dbReference type="ChEBI" id="CHEBI:58349"/>
    </ligand>
</feature>
<feature type="binding site" evidence="1">
    <location>
        <position position="50"/>
    </location>
    <ligand>
        <name>NADP(+)</name>
        <dbReference type="ChEBI" id="CHEBI:58349"/>
    </ligand>
</feature>
<feature type="binding site" evidence="1">
    <location>
        <position position="52"/>
    </location>
    <ligand>
        <name>NADP(+)</name>
        <dbReference type="ChEBI" id="CHEBI:58349"/>
    </ligand>
</feature>
<feature type="binding site" evidence="1">
    <location>
        <begin position="82"/>
        <end position="85"/>
    </location>
    <ligand>
        <name>NADP(+)</name>
        <dbReference type="ChEBI" id="CHEBI:58349"/>
    </ligand>
</feature>
<feature type="binding site" evidence="1">
    <location>
        <position position="133"/>
    </location>
    <ligand>
        <name>NADP(+)</name>
        <dbReference type="ChEBI" id="CHEBI:58349"/>
    </ligand>
</feature>
<feature type="binding site" evidence="1">
    <location>
        <position position="190"/>
    </location>
    <ligand>
        <name>Mg(2+)</name>
        <dbReference type="ChEBI" id="CHEBI:18420"/>
        <label>1</label>
    </ligand>
</feature>
<feature type="binding site" evidence="1">
    <location>
        <position position="190"/>
    </location>
    <ligand>
        <name>Mg(2+)</name>
        <dbReference type="ChEBI" id="CHEBI:18420"/>
        <label>2</label>
    </ligand>
</feature>
<feature type="binding site" evidence="1">
    <location>
        <position position="194"/>
    </location>
    <ligand>
        <name>Mg(2+)</name>
        <dbReference type="ChEBI" id="CHEBI:18420"/>
        <label>1</label>
    </ligand>
</feature>
<feature type="binding site" evidence="1">
    <location>
        <position position="226"/>
    </location>
    <ligand>
        <name>Mg(2+)</name>
        <dbReference type="ChEBI" id="CHEBI:18420"/>
        <label>2</label>
    </ligand>
</feature>
<feature type="binding site" evidence="1">
    <location>
        <position position="230"/>
    </location>
    <ligand>
        <name>Mg(2+)</name>
        <dbReference type="ChEBI" id="CHEBI:18420"/>
        <label>2</label>
    </ligand>
</feature>
<feature type="binding site" evidence="1">
    <location>
        <position position="251"/>
    </location>
    <ligand>
        <name>substrate</name>
    </ligand>
</feature>
<organism>
    <name type="scientific">Alcanivorax borkumensis (strain ATCC 700651 / DSM 11573 / NCIMB 13689 / SK2)</name>
    <dbReference type="NCBI Taxonomy" id="393595"/>
    <lineage>
        <taxon>Bacteria</taxon>
        <taxon>Pseudomonadati</taxon>
        <taxon>Pseudomonadota</taxon>
        <taxon>Gammaproteobacteria</taxon>
        <taxon>Oceanospirillales</taxon>
        <taxon>Alcanivoracaceae</taxon>
        <taxon>Alcanivorax</taxon>
    </lineage>
</organism>
<reference key="1">
    <citation type="journal article" date="2006" name="Nat. Biotechnol.">
        <title>Genome sequence of the ubiquitous hydrocarbon-degrading marine bacterium Alcanivorax borkumensis.</title>
        <authorList>
            <person name="Schneiker S."/>
            <person name="Martins dos Santos V.A.P."/>
            <person name="Bartels D."/>
            <person name="Bekel T."/>
            <person name="Brecht M."/>
            <person name="Buhrmester J."/>
            <person name="Chernikova T.N."/>
            <person name="Denaro R."/>
            <person name="Ferrer M."/>
            <person name="Gertler C."/>
            <person name="Goesmann A."/>
            <person name="Golyshina O.V."/>
            <person name="Kaminski F."/>
            <person name="Khachane A.N."/>
            <person name="Lang S."/>
            <person name="Linke B."/>
            <person name="McHardy A.C."/>
            <person name="Meyer F."/>
            <person name="Nechitaylo T."/>
            <person name="Puehler A."/>
            <person name="Regenhardt D."/>
            <person name="Rupp O."/>
            <person name="Sabirova J.S."/>
            <person name="Selbitschka W."/>
            <person name="Yakimov M.M."/>
            <person name="Timmis K.N."/>
            <person name="Vorhoelter F.-J."/>
            <person name="Weidner S."/>
            <person name="Kaiser O."/>
            <person name="Golyshin P.N."/>
        </authorList>
    </citation>
    <scope>NUCLEOTIDE SEQUENCE [LARGE SCALE GENOMIC DNA]</scope>
    <source>
        <strain>ATCC 700651 / DSM 11573 / NCIMB 13689 / SK2</strain>
    </source>
</reference>
<comment type="function">
    <text evidence="1">Involved in the biosynthesis of branched-chain amino acids (BCAA). Catalyzes an alkyl-migration followed by a ketol-acid reduction of (S)-2-acetolactate (S2AL) to yield (R)-2,3-dihydroxy-isovalerate. In the isomerase reaction, S2AL is rearranged via a Mg-dependent methyl migration to produce 3-hydroxy-3-methyl-2-ketobutyrate (HMKB). In the reductase reaction, this 2-ketoacid undergoes a metal-dependent reduction by NADPH to yield (R)-2,3-dihydroxy-isovalerate.</text>
</comment>
<comment type="catalytic activity">
    <reaction evidence="1">
        <text>(2R)-2,3-dihydroxy-3-methylbutanoate + NADP(+) = (2S)-2-acetolactate + NADPH + H(+)</text>
        <dbReference type="Rhea" id="RHEA:22068"/>
        <dbReference type="ChEBI" id="CHEBI:15378"/>
        <dbReference type="ChEBI" id="CHEBI:49072"/>
        <dbReference type="ChEBI" id="CHEBI:57783"/>
        <dbReference type="ChEBI" id="CHEBI:58349"/>
        <dbReference type="ChEBI" id="CHEBI:58476"/>
        <dbReference type="EC" id="1.1.1.86"/>
    </reaction>
</comment>
<comment type="catalytic activity">
    <reaction evidence="1">
        <text>(2R,3R)-2,3-dihydroxy-3-methylpentanoate + NADP(+) = (S)-2-ethyl-2-hydroxy-3-oxobutanoate + NADPH + H(+)</text>
        <dbReference type="Rhea" id="RHEA:13493"/>
        <dbReference type="ChEBI" id="CHEBI:15378"/>
        <dbReference type="ChEBI" id="CHEBI:49256"/>
        <dbReference type="ChEBI" id="CHEBI:49258"/>
        <dbReference type="ChEBI" id="CHEBI:57783"/>
        <dbReference type="ChEBI" id="CHEBI:58349"/>
        <dbReference type="EC" id="1.1.1.86"/>
    </reaction>
</comment>
<comment type="cofactor">
    <cofactor evidence="1">
        <name>Mg(2+)</name>
        <dbReference type="ChEBI" id="CHEBI:18420"/>
    </cofactor>
    <text evidence="1">Binds 2 magnesium ions per subunit.</text>
</comment>
<comment type="pathway">
    <text evidence="1">Amino-acid biosynthesis; L-isoleucine biosynthesis; L-isoleucine from 2-oxobutanoate: step 2/4.</text>
</comment>
<comment type="pathway">
    <text evidence="1">Amino-acid biosynthesis; L-valine biosynthesis; L-valine from pyruvate: step 2/4.</text>
</comment>
<comment type="similarity">
    <text evidence="1">Belongs to the ketol-acid reductoisomerase family.</text>
</comment>
<comment type="sequence caution" evidence="4">
    <conflict type="erroneous initiation">
        <sequence resource="EMBL-CDS" id="CAL15933"/>
    </conflict>
</comment>
<accession>Q0VSB5</accession>
<sequence length="338" mass="36297">MQVYYDKDCDLSIIQGKKVAILGYGSQGHAHACNLKDSGVDVVVGLRTGSTSIAKAEAHGLSVTDVPSAVAAADVVMVLTPDEFQAHLYKSDIEPNLKEGATLAFAHGFAIHYNQIVPRADLDVIMIAPKAPGHTVRTEFTKGGGIPDLIAIFQDASGSAKELALSYACGVGGGRTGIIETTFKDETETDLFGEQAVLCGGAVELVKAGFETLTEAGYAPEMAYFECLHELKLIVDLMYEGGIANMNYSISNNAEYGEYVTGPEVINDESRAAMRNALKRIQSGEYAKMFIAEGAHNYPSMTAARRNNAAHPIEQVGEKLRGMMPWIQANQIVDKTKN</sequence>
<name>ILVC_ALCBS</name>
<keyword id="KW-0028">Amino-acid biosynthesis</keyword>
<keyword id="KW-0100">Branched-chain amino acid biosynthesis</keyword>
<keyword id="KW-0460">Magnesium</keyword>
<keyword id="KW-0479">Metal-binding</keyword>
<keyword id="KW-0521">NADP</keyword>
<keyword id="KW-0560">Oxidoreductase</keyword>
<keyword id="KW-1185">Reference proteome</keyword>